<reference key="1">
    <citation type="journal article" date="2009" name="Infect. Immun.">
        <title>Comparative genomics reveal extensive transposon-mediated genomic plasticity and diversity among potential effector proteins within the genus Coxiella.</title>
        <authorList>
            <person name="Beare P.A."/>
            <person name="Unsworth N."/>
            <person name="Andoh M."/>
            <person name="Voth D.E."/>
            <person name="Omsland A."/>
            <person name="Gilk S.D."/>
            <person name="Williams K.P."/>
            <person name="Sobral B.W."/>
            <person name="Kupko J.J. III"/>
            <person name="Porcella S.F."/>
            <person name="Samuel J.E."/>
            <person name="Heinzen R.A."/>
        </authorList>
    </citation>
    <scope>NUCLEOTIDE SEQUENCE [LARGE SCALE GENOMIC DNA]</scope>
    <source>
        <strain>Dugway 5J108-111</strain>
    </source>
</reference>
<feature type="chain" id="PRO_1000080346" description="Large ribosomal subunit protein bL19">
    <location>
        <begin position="1"/>
        <end position="115"/>
    </location>
</feature>
<proteinExistence type="inferred from homology"/>
<accession>A9KEF0</accession>
<keyword id="KW-0687">Ribonucleoprotein</keyword>
<keyword id="KW-0689">Ribosomal protein</keyword>
<protein>
    <recommendedName>
        <fullName evidence="1">Large ribosomal subunit protein bL19</fullName>
    </recommendedName>
    <alternativeName>
        <fullName evidence="2">50S ribosomal protein L19</fullName>
    </alternativeName>
</protein>
<sequence length="115" mass="13275">MNNIIQLLETEQTQGKEIPDFRAGDTVTVQVKVKEGNRERLQAFEGVVIARRHRGLNSSFTVRKVSHGEGVERVFQLYSPLIASIKVNRRGDVRRAKLYYLRNLRGRKAKIKEKI</sequence>
<evidence type="ECO:0000255" key="1">
    <source>
        <dbReference type="HAMAP-Rule" id="MF_00402"/>
    </source>
</evidence>
<evidence type="ECO:0000305" key="2"/>
<name>RL19_COXBN</name>
<gene>
    <name evidence="1" type="primary">rplS</name>
    <name type="ordered locus">CBUD_1632</name>
</gene>
<organism>
    <name type="scientific">Coxiella burnetii (strain Dugway 5J108-111)</name>
    <dbReference type="NCBI Taxonomy" id="434922"/>
    <lineage>
        <taxon>Bacteria</taxon>
        <taxon>Pseudomonadati</taxon>
        <taxon>Pseudomonadota</taxon>
        <taxon>Gammaproteobacteria</taxon>
        <taxon>Legionellales</taxon>
        <taxon>Coxiellaceae</taxon>
        <taxon>Coxiella</taxon>
    </lineage>
</organism>
<comment type="function">
    <text evidence="1">This protein is located at the 30S-50S ribosomal subunit interface and may play a role in the structure and function of the aminoacyl-tRNA binding site.</text>
</comment>
<comment type="similarity">
    <text evidence="1">Belongs to the bacterial ribosomal protein bL19 family.</text>
</comment>
<dbReference type="EMBL" id="CP000733">
    <property type="protein sequence ID" value="ABS78367.1"/>
    <property type="molecule type" value="Genomic_DNA"/>
</dbReference>
<dbReference type="RefSeq" id="WP_005771383.1">
    <property type="nucleotide sequence ID" value="NC_009727.1"/>
</dbReference>
<dbReference type="SMR" id="A9KEF0"/>
<dbReference type="KEGG" id="cbd:CBUD_1632"/>
<dbReference type="HOGENOM" id="CLU_103507_2_1_6"/>
<dbReference type="Proteomes" id="UP000008555">
    <property type="component" value="Chromosome"/>
</dbReference>
<dbReference type="GO" id="GO:0022625">
    <property type="term" value="C:cytosolic large ribosomal subunit"/>
    <property type="evidence" value="ECO:0007669"/>
    <property type="project" value="TreeGrafter"/>
</dbReference>
<dbReference type="GO" id="GO:0003735">
    <property type="term" value="F:structural constituent of ribosome"/>
    <property type="evidence" value="ECO:0007669"/>
    <property type="project" value="InterPro"/>
</dbReference>
<dbReference type="GO" id="GO:0006412">
    <property type="term" value="P:translation"/>
    <property type="evidence" value="ECO:0007669"/>
    <property type="project" value="UniProtKB-UniRule"/>
</dbReference>
<dbReference type="FunFam" id="2.30.30.790:FF:000001">
    <property type="entry name" value="50S ribosomal protein L19"/>
    <property type="match status" value="1"/>
</dbReference>
<dbReference type="Gene3D" id="2.30.30.790">
    <property type="match status" value="1"/>
</dbReference>
<dbReference type="HAMAP" id="MF_00402">
    <property type="entry name" value="Ribosomal_bL19"/>
    <property type="match status" value="1"/>
</dbReference>
<dbReference type="InterPro" id="IPR001857">
    <property type="entry name" value="Ribosomal_bL19"/>
</dbReference>
<dbReference type="InterPro" id="IPR018257">
    <property type="entry name" value="Ribosomal_bL19_CS"/>
</dbReference>
<dbReference type="InterPro" id="IPR038657">
    <property type="entry name" value="Ribosomal_bL19_sf"/>
</dbReference>
<dbReference type="InterPro" id="IPR008991">
    <property type="entry name" value="Translation_prot_SH3-like_sf"/>
</dbReference>
<dbReference type="NCBIfam" id="TIGR01024">
    <property type="entry name" value="rplS_bact"/>
    <property type="match status" value="1"/>
</dbReference>
<dbReference type="PANTHER" id="PTHR15680:SF9">
    <property type="entry name" value="LARGE RIBOSOMAL SUBUNIT PROTEIN BL19M"/>
    <property type="match status" value="1"/>
</dbReference>
<dbReference type="PANTHER" id="PTHR15680">
    <property type="entry name" value="RIBOSOMAL PROTEIN L19"/>
    <property type="match status" value="1"/>
</dbReference>
<dbReference type="Pfam" id="PF01245">
    <property type="entry name" value="Ribosomal_L19"/>
    <property type="match status" value="1"/>
</dbReference>
<dbReference type="PIRSF" id="PIRSF002191">
    <property type="entry name" value="Ribosomal_L19"/>
    <property type="match status" value="1"/>
</dbReference>
<dbReference type="PRINTS" id="PR00061">
    <property type="entry name" value="RIBOSOMALL19"/>
</dbReference>
<dbReference type="SUPFAM" id="SSF50104">
    <property type="entry name" value="Translation proteins SH3-like domain"/>
    <property type="match status" value="1"/>
</dbReference>
<dbReference type="PROSITE" id="PS01015">
    <property type="entry name" value="RIBOSOMAL_L19"/>
    <property type="match status" value="1"/>
</dbReference>